<dbReference type="EMBL" id="AABR03104971">
    <property type="status" value="NOT_ANNOTATED_CDS"/>
    <property type="molecule type" value="Genomic_DNA"/>
</dbReference>
<dbReference type="EMBL" id="AABR03106335">
    <property type="status" value="NOT_ANNOTATED_CDS"/>
    <property type="molecule type" value="Genomic_DNA"/>
</dbReference>
<dbReference type="EMBL" id="AABR03107130">
    <property type="status" value="NOT_ANNOTATED_CDS"/>
    <property type="molecule type" value="Genomic_DNA"/>
</dbReference>
<dbReference type="RefSeq" id="NP_001032632.1">
    <property type="nucleotide sequence ID" value="NM_001037543.1"/>
</dbReference>
<dbReference type="SMR" id="P0C5I0"/>
<dbReference type="FunCoup" id="P0C5I0">
    <property type="interactions" value="315"/>
</dbReference>
<dbReference type="STRING" id="10116.ENSRNOP00000030751"/>
<dbReference type="PhosphoSitePlus" id="P0C5I0"/>
<dbReference type="SwissPalm" id="P0C5I0"/>
<dbReference type="PaxDb" id="10116-ENSRNOP00000030751"/>
<dbReference type="Ensembl" id="ENSRNOT00000036299.4">
    <property type="protein sequence ID" value="ENSRNOP00000030751.2"/>
    <property type="gene ID" value="ENSRNOG00000026493.5"/>
</dbReference>
<dbReference type="GeneID" id="361276"/>
<dbReference type="KEGG" id="rno:361276"/>
<dbReference type="UCSC" id="RGD:1307600">
    <property type="organism name" value="rat"/>
</dbReference>
<dbReference type="AGR" id="RGD:1307600"/>
<dbReference type="CTD" id="441549"/>
<dbReference type="RGD" id="1307600">
    <property type="gene designation" value="Cdnf"/>
</dbReference>
<dbReference type="eggNOG" id="KOG4154">
    <property type="taxonomic scope" value="Eukaryota"/>
</dbReference>
<dbReference type="GeneTree" id="ENSGT00390000007160"/>
<dbReference type="HOGENOM" id="CLU_099080_1_0_1"/>
<dbReference type="InParanoid" id="P0C5I0"/>
<dbReference type="OMA" id="DSWGEVC"/>
<dbReference type="OrthoDB" id="31688at9989"/>
<dbReference type="PhylomeDB" id="P0C5I0"/>
<dbReference type="TreeFam" id="TF314252"/>
<dbReference type="PRO" id="PR:P0C5I0"/>
<dbReference type="Proteomes" id="UP000002494">
    <property type="component" value="Chromosome 17"/>
</dbReference>
<dbReference type="Bgee" id="ENSRNOG00000026493">
    <property type="expression patterns" value="Expressed in skeletal muscle tissue and 4 other cell types or tissues"/>
</dbReference>
<dbReference type="GO" id="GO:0005783">
    <property type="term" value="C:endoplasmic reticulum"/>
    <property type="evidence" value="ECO:0000318"/>
    <property type="project" value="GO_Central"/>
</dbReference>
<dbReference type="GO" id="GO:0005615">
    <property type="term" value="C:extracellular space"/>
    <property type="evidence" value="ECO:0000318"/>
    <property type="project" value="GO_Central"/>
</dbReference>
<dbReference type="GO" id="GO:0008083">
    <property type="term" value="F:growth factor activity"/>
    <property type="evidence" value="ECO:0007669"/>
    <property type="project" value="UniProtKB-KW"/>
</dbReference>
<dbReference type="GO" id="GO:0071542">
    <property type="term" value="P:dopaminergic neuron differentiation"/>
    <property type="evidence" value="ECO:0000318"/>
    <property type="project" value="GO_Central"/>
</dbReference>
<dbReference type="GO" id="GO:0031175">
    <property type="term" value="P:neuron projection development"/>
    <property type="evidence" value="ECO:0000318"/>
    <property type="project" value="GO_Central"/>
</dbReference>
<dbReference type="FunFam" id="1.10.225.10:FF:000003">
    <property type="entry name" value="Mesencephalic astrocyte-derived neurotrophic factor"/>
    <property type="match status" value="1"/>
</dbReference>
<dbReference type="FunFam" id="1.10.720.30:FF:000003">
    <property type="entry name" value="Mesencephalic astrocyte-derived neurotrophic factor"/>
    <property type="match status" value="1"/>
</dbReference>
<dbReference type="Gene3D" id="1.10.720.30">
    <property type="entry name" value="SAP domain"/>
    <property type="match status" value="1"/>
</dbReference>
<dbReference type="Gene3D" id="1.10.225.10">
    <property type="entry name" value="Saposin-like"/>
    <property type="match status" value="1"/>
</dbReference>
<dbReference type="InterPro" id="IPR045333">
    <property type="entry name" value="ARMET-like"/>
</dbReference>
<dbReference type="InterPro" id="IPR019345">
    <property type="entry name" value="ARMET_C"/>
</dbReference>
<dbReference type="InterPro" id="IPR045332">
    <property type="entry name" value="ARMET_N"/>
</dbReference>
<dbReference type="InterPro" id="IPR036361">
    <property type="entry name" value="SAP_dom_sf"/>
</dbReference>
<dbReference type="PANTHER" id="PTHR12990">
    <property type="entry name" value="ARMET-LIKE PROTEIN"/>
    <property type="match status" value="1"/>
</dbReference>
<dbReference type="PANTHER" id="PTHR12990:SF9">
    <property type="entry name" value="CEREBRAL DOPAMINE NEUROTROPHIC FACTOR"/>
    <property type="match status" value="1"/>
</dbReference>
<dbReference type="Pfam" id="PF10208">
    <property type="entry name" value="ARMET_C"/>
    <property type="match status" value="1"/>
</dbReference>
<dbReference type="Pfam" id="PF20145">
    <property type="entry name" value="ARMET_N"/>
    <property type="match status" value="1"/>
</dbReference>
<dbReference type="SUPFAM" id="SSF68906">
    <property type="entry name" value="SAP domain"/>
    <property type="match status" value="1"/>
</dbReference>
<comment type="function">
    <text evidence="3">Trophic factor for dopamine neurons. Prevents the 6-hydroxydopamine (6-OHDA)-induced degeneration of dopaminergic neurons. When administered after 6-OHDA-lesioning, restores the dopaminergic function and prevents the degeneration of dopaminergic neurons in substantia nigra.</text>
</comment>
<comment type="subcellular location">
    <subcellularLocation>
        <location evidence="1">Secreted</location>
    </subcellularLocation>
</comment>
<comment type="similarity">
    <text evidence="4">Belongs to the ARMET family.</text>
</comment>
<gene>
    <name type="primary">Cdnf</name>
    <name type="synonym">Armetl1</name>
</gene>
<name>CDNF_RAT</name>
<proteinExistence type="inferred from homology"/>
<sequence length="187" mass="21361">MRCTSPAALVTFCAGLWISNHVLAQGLEAGVRSRADCEVCKEFLNRFYNSLLTRGIDFSVDTIEEELISFCADTKGKENRLCYYLGATKDSATKILGEVTRPMSVHMPTVKICEKLKKMDSQICELKYEKKLDLESVDLWKMRVAELKQILHSWGEECRACAEKHDYVNLIKELAPKYVETRPQTEL</sequence>
<evidence type="ECO:0000250" key="1"/>
<evidence type="ECO:0000255" key="2"/>
<evidence type="ECO:0000269" key="3">
    <source>
    </source>
</evidence>
<evidence type="ECO:0000305" key="4"/>
<reference key="1">
    <citation type="journal article" date="2004" name="Nature">
        <title>Genome sequence of the Brown Norway rat yields insights into mammalian evolution.</title>
        <authorList>
            <person name="Gibbs R.A."/>
            <person name="Weinstock G.M."/>
            <person name="Metzker M.L."/>
            <person name="Muzny D.M."/>
            <person name="Sodergren E.J."/>
            <person name="Scherer S."/>
            <person name="Scott G."/>
            <person name="Steffen D."/>
            <person name="Worley K.C."/>
            <person name="Burch P.E."/>
            <person name="Okwuonu G."/>
            <person name="Hines S."/>
            <person name="Lewis L."/>
            <person name="Deramo C."/>
            <person name="Delgado O."/>
            <person name="Dugan-Rocha S."/>
            <person name="Miner G."/>
            <person name="Morgan M."/>
            <person name="Hawes A."/>
            <person name="Gill R."/>
            <person name="Holt R.A."/>
            <person name="Adams M.D."/>
            <person name="Amanatides P.G."/>
            <person name="Baden-Tillson H."/>
            <person name="Barnstead M."/>
            <person name="Chin S."/>
            <person name="Evans C.A."/>
            <person name="Ferriera S."/>
            <person name="Fosler C."/>
            <person name="Glodek A."/>
            <person name="Gu Z."/>
            <person name="Jennings D."/>
            <person name="Kraft C.L."/>
            <person name="Nguyen T."/>
            <person name="Pfannkoch C.M."/>
            <person name="Sitter C."/>
            <person name="Sutton G.G."/>
            <person name="Venter J.C."/>
            <person name="Woodage T."/>
            <person name="Smith D."/>
            <person name="Lee H.-M."/>
            <person name="Gustafson E."/>
            <person name="Cahill P."/>
            <person name="Kana A."/>
            <person name="Doucette-Stamm L."/>
            <person name="Weinstock K."/>
            <person name="Fechtel K."/>
            <person name="Weiss R.B."/>
            <person name="Dunn D.M."/>
            <person name="Green E.D."/>
            <person name="Blakesley R.W."/>
            <person name="Bouffard G.G."/>
            <person name="De Jong P.J."/>
            <person name="Osoegawa K."/>
            <person name="Zhu B."/>
            <person name="Marra M."/>
            <person name="Schein J."/>
            <person name="Bosdet I."/>
            <person name="Fjell C."/>
            <person name="Jones S."/>
            <person name="Krzywinski M."/>
            <person name="Mathewson C."/>
            <person name="Siddiqui A."/>
            <person name="Wye N."/>
            <person name="McPherson J."/>
            <person name="Zhao S."/>
            <person name="Fraser C.M."/>
            <person name="Shetty J."/>
            <person name="Shatsman S."/>
            <person name="Geer K."/>
            <person name="Chen Y."/>
            <person name="Abramzon S."/>
            <person name="Nierman W.C."/>
            <person name="Havlak P.H."/>
            <person name="Chen R."/>
            <person name="Durbin K.J."/>
            <person name="Egan A."/>
            <person name="Ren Y."/>
            <person name="Song X.-Z."/>
            <person name="Li B."/>
            <person name="Liu Y."/>
            <person name="Qin X."/>
            <person name="Cawley S."/>
            <person name="Cooney A.J."/>
            <person name="D'Souza L.M."/>
            <person name="Martin K."/>
            <person name="Wu J.Q."/>
            <person name="Gonzalez-Garay M.L."/>
            <person name="Jackson A.R."/>
            <person name="Kalafus K.J."/>
            <person name="McLeod M.P."/>
            <person name="Milosavljevic A."/>
            <person name="Virk D."/>
            <person name="Volkov A."/>
            <person name="Wheeler D.A."/>
            <person name="Zhang Z."/>
            <person name="Bailey J.A."/>
            <person name="Eichler E.E."/>
            <person name="Tuzun E."/>
            <person name="Birney E."/>
            <person name="Mongin E."/>
            <person name="Ureta-Vidal A."/>
            <person name="Woodwark C."/>
            <person name="Zdobnov E."/>
            <person name="Bork P."/>
            <person name="Suyama M."/>
            <person name="Torrents D."/>
            <person name="Alexandersson M."/>
            <person name="Trask B.J."/>
            <person name="Young J.M."/>
            <person name="Huang H."/>
            <person name="Wang H."/>
            <person name="Xing H."/>
            <person name="Daniels S."/>
            <person name="Gietzen D."/>
            <person name="Schmidt J."/>
            <person name="Stevens K."/>
            <person name="Vitt U."/>
            <person name="Wingrove J."/>
            <person name="Camara F."/>
            <person name="Mar Alba M."/>
            <person name="Abril J.F."/>
            <person name="Guigo R."/>
            <person name="Smit A."/>
            <person name="Dubchak I."/>
            <person name="Rubin E.M."/>
            <person name="Couronne O."/>
            <person name="Poliakov A."/>
            <person name="Huebner N."/>
            <person name="Ganten D."/>
            <person name="Goesele C."/>
            <person name="Hummel O."/>
            <person name="Kreitler T."/>
            <person name="Lee Y.-A."/>
            <person name="Monti J."/>
            <person name="Schulz H."/>
            <person name="Zimdahl H."/>
            <person name="Himmelbauer H."/>
            <person name="Lehrach H."/>
            <person name="Jacob H.J."/>
            <person name="Bromberg S."/>
            <person name="Gullings-Handley J."/>
            <person name="Jensen-Seaman M.I."/>
            <person name="Kwitek A.E."/>
            <person name="Lazar J."/>
            <person name="Pasko D."/>
            <person name="Tonellato P.J."/>
            <person name="Twigger S."/>
            <person name="Ponting C.P."/>
            <person name="Duarte J.M."/>
            <person name="Rice S."/>
            <person name="Goodstadt L."/>
            <person name="Beatson S.A."/>
            <person name="Emes R.D."/>
            <person name="Winter E.E."/>
            <person name="Webber C."/>
            <person name="Brandt P."/>
            <person name="Nyakatura G."/>
            <person name="Adetobi M."/>
            <person name="Chiaromonte F."/>
            <person name="Elnitski L."/>
            <person name="Eswara P."/>
            <person name="Hardison R.C."/>
            <person name="Hou M."/>
            <person name="Kolbe D."/>
            <person name="Makova K."/>
            <person name="Miller W."/>
            <person name="Nekrutenko A."/>
            <person name="Riemer C."/>
            <person name="Schwartz S."/>
            <person name="Taylor J."/>
            <person name="Yang S."/>
            <person name="Zhang Y."/>
            <person name="Lindpaintner K."/>
            <person name="Andrews T.D."/>
            <person name="Caccamo M."/>
            <person name="Clamp M."/>
            <person name="Clarke L."/>
            <person name="Curwen V."/>
            <person name="Durbin R.M."/>
            <person name="Eyras E."/>
            <person name="Searle S.M."/>
            <person name="Cooper G.M."/>
            <person name="Batzoglou S."/>
            <person name="Brudno M."/>
            <person name="Sidow A."/>
            <person name="Stone E.A."/>
            <person name="Payseur B.A."/>
            <person name="Bourque G."/>
            <person name="Lopez-Otin C."/>
            <person name="Puente X.S."/>
            <person name="Chakrabarti K."/>
            <person name="Chatterji S."/>
            <person name="Dewey C."/>
            <person name="Pachter L."/>
            <person name="Bray N."/>
            <person name="Yap V.B."/>
            <person name="Caspi A."/>
            <person name="Tesler G."/>
            <person name="Pevzner P.A."/>
            <person name="Haussler D."/>
            <person name="Roskin K.M."/>
            <person name="Baertsch R."/>
            <person name="Clawson H."/>
            <person name="Furey T.S."/>
            <person name="Hinrichs A.S."/>
            <person name="Karolchik D."/>
            <person name="Kent W.J."/>
            <person name="Rosenbloom K.R."/>
            <person name="Trumbower H."/>
            <person name="Weirauch M."/>
            <person name="Cooper D.N."/>
            <person name="Stenson P.D."/>
            <person name="Ma B."/>
            <person name="Brent M."/>
            <person name="Arumugam M."/>
            <person name="Shteynberg D."/>
            <person name="Copley R.R."/>
            <person name="Taylor M.S."/>
            <person name="Riethman H."/>
            <person name="Mudunuri U."/>
            <person name="Peterson J."/>
            <person name="Guyer M."/>
            <person name="Felsenfeld A."/>
            <person name="Old S."/>
            <person name="Mockrin S."/>
            <person name="Collins F.S."/>
        </authorList>
    </citation>
    <scope>NUCLEOTIDE SEQUENCE [LARGE SCALE GENOMIC DNA]</scope>
    <source>
        <strain>Brown Norway</strain>
    </source>
</reference>
<reference key="2">
    <citation type="journal article" date="2007" name="Nature">
        <title>Novel neurotrophic factor CDNF protects and rescues midbrain dopamine neurons in vivo.</title>
        <authorList>
            <person name="Lindholm P."/>
            <person name="Voutilainen M.H."/>
            <person name="Lauren J."/>
            <person name="Peraenen J."/>
            <person name="Leppaenen V.-M."/>
            <person name="Andressoo J.-O."/>
            <person name="Lindahl M."/>
            <person name="Janhunen S."/>
            <person name="Kalkkinen N."/>
            <person name="Timmusk T."/>
            <person name="Tuominen R.K."/>
            <person name="Saarma M."/>
        </authorList>
    </citation>
    <scope>FUNCTION</scope>
</reference>
<organism>
    <name type="scientific">Rattus norvegicus</name>
    <name type="common">Rat</name>
    <dbReference type="NCBI Taxonomy" id="10116"/>
    <lineage>
        <taxon>Eukaryota</taxon>
        <taxon>Metazoa</taxon>
        <taxon>Chordata</taxon>
        <taxon>Craniata</taxon>
        <taxon>Vertebrata</taxon>
        <taxon>Euteleostomi</taxon>
        <taxon>Mammalia</taxon>
        <taxon>Eutheria</taxon>
        <taxon>Euarchontoglires</taxon>
        <taxon>Glires</taxon>
        <taxon>Rodentia</taxon>
        <taxon>Myomorpha</taxon>
        <taxon>Muroidea</taxon>
        <taxon>Muridae</taxon>
        <taxon>Murinae</taxon>
        <taxon>Rattus</taxon>
    </lineage>
</organism>
<accession>P0C5I0</accession>
<keyword id="KW-1015">Disulfide bond</keyword>
<keyword id="KW-0339">Growth factor</keyword>
<keyword id="KW-1185">Reference proteome</keyword>
<keyword id="KW-0964">Secreted</keyword>
<keyword id="KW-0732">Signal</keyword>
<feature type="signal peptide" evidence="2">
    <location>
        <begin position="1"/>
        <end position="24"/>
    </location>
</feature>
<feature type="chain" id="PRO_0000306860" description="Cerebral dopamine neurotrophic factor">
    <location>
        <begin position="25"/>
        <end position="187"/>
    </location>
</feature>
<feature type="disulfide bond" evidence="1">
    <location>
        <begin position="37"/>
        <end position="124"/>
    </location>
</feature>
<feature type="disulfide bond" evidence="1">
    <location>
        <begin position="40"/>
        <end position="113"/>
    </location>
</feature>
<feature type="disulfide bond" evidence="1">
    <location>
        <begin position="71"/>
        <end position="82"/>
    </location>
</feature>
<protein>
    <recommendedName>
        <fullName>Cerebral dopamine neurotrophic factor</fullName>
    </recommendedName>
    <alternativeName>
        <fullName>ARMET-like protein 1</fullName>
    </alternativeName>
    <alternativeName>
        <fullName>Arginine-rich protein mutated in early stage tumors-like 1</fullName>
    </alternativeName>
    <alternativeName>
        <fullName>Conserved dopamine neurotrophic factor</fullName>
    </alternativeName>
</protein>